<feature type="chain" id="PRO_0000406441" description="Transcription activator of gluconeogenesis NECHADRAFT_59099">
    <location>
        <begin position="1"/>
        <end position="662"/>
    </location>
</feature>
<feature type="domain" description="PAS">
    <location>
        <begin position="448"/>
        <end position="519"/>
    </location>
</feature>
<feature type="DNA-binding region" description="Zn(2)-C6 fungal-type" evidence="2">
    <location>
        <begin position="66"/>
        <end position="94"/>
    </location>
</feature>
<feature type="region of interest" description="Disordered" evidence="3">
    <location>
        <begin position="1"/>
        <end position="61"/>
    </location>
</feature>
<feature type="region of interest" description="Disordered" evidence="3">
    <location>
        <begin position="105"/>
        <end position="149"/>
    </location>
</feature>
<feature type="region of interest" description="Disordered" evidence="3">
    <location>
        <begin position="502"/>
        <end position="524"/>
    </location>
</feature>
<feature type="region of interest" description="Disordered" evidence="3">
    <location>
        <begin position="580"/>
        <end position="606"/>
    </location>
</feature>
<feature type="compositionally biased region" description="Basic and acidic residues" evidence="3">
    <location>
        <begin position="25"/>
        <end position="34"/>
    </location>
</feature>
<feature type="compositionally biased region" description="Basic and acidic residues" evidence="3">
    <location>
        <begin position="43"/>
        <end position="56"/>
    </location>
</feature>
<feature type="compositionally biased region" description="Polar residues" evidence="3">
    <location>
        <begin position="121"/>
        <end position="130"/>
    </location>
</feature>
<feature type="compositionally biased region" description="Polar residues" evidence="3">
    <location>
        <begin position="137"/>
        <end position="149"/>
    </location>
</feature>
<feature type="compositionally biased region" description="Basic and acidic residues" evidence="3">
    <location>
        <begin position="582"/>
        <end position="593"/>
    </location>
</feature>
<comment type="function">
    <text evidence="1">Transcription factor which regulates nonfermentable carbon utilization. Activator of gluconeogenetic genes (By similarity).</text>
</comment>
<comment type="subcellular location">
    <subcellularLocation>
        <location evidence="2">Nucleus</location>
    </subcellularLocation>
</comment>
<comment type="similarity">
    <text evidence="4">Belongs to the ERT1/acuK family.</text>
</comment>
<evidence type="ECO:0000250" key="1"/>
<evidence type="ECO:0000255" key="2">
    <source>
        <dbReference type="PROSITE-ProRule" id="PRU00227"/>
    </source>
</evidence>
<evidence type="ECO:0000256" key="3">
    <source>
        <dbReference type="SAM" id="MobiDB-lite"/>
    </source>
</evidence>
<evidence type="ECO:0000305" key="4"/>
<keyword id="KW-0010">Activator</keyword>
<keyword id="KW-0238">DNA-binding</keyword>
<keyword id="KW-0312">Gluconeogenesis</keyword>
<keyword id="KW-0479">Metal-binding</keyword>
<keyword id="KW-0539">Nucleus</keyword>
<keyword id="KW-1185">Reference proteome</keyword>
<keyword id="KW-0804">Transcription</keyword>
<keyword id="KW-0805">Transcription regulation</keyword>
<keyword id="KW-0862">Zinc</keyword>
<name>ACUK_FUSV7</name>
<proteinExistence type="inferred from homology"/>
<dbReference type="EMBL" id="GG698897">
    <property type="protein sequence ID" value="EEU47385.1"/>
    <property type="molecule type" value="Genomic_DNA"/>
</dbReference>
<dbReference type="RefSeq" id="XP_003053098.1">
    <property type="nucleotide sequence ID" value="XM_003053052.1"/>
</dbReference>
<dbReference type="SMR" id="C7YM38"/>
<dbReference type="FunCoup" id="C7YM38">
    <property type="interactions" value="233"/>
</dbReference>
<dbReference type="EnsemblFungi" id="NechaT59099">
    <property type="protein sequence ID" value="NechaP59099"/>
    <property type="gene ID" value="NechaG59099"/>
</dbReference>
<dbReference type="GeneID" id="9671122"/>
<dbReference type="KEGG" id="nhe:NECHADRAFT_59099"/>
<dbReference type="VEuPathDB" id="FungiDB:NECHADRAFT_59099"/>
<dbReference type="eggNOG" id="ENOG502R1M5">
    <property type="taxonomic scope" value="Eukaryota"/>
</dbReference>
<dbReference type="HOGENOM" id="CLU_010748_1_0_1"/>
<dbReference type="InParanoid" id="C7YM38"/>
<dbReference type="OMA" id="VMTTCKL"/>
<dbReference type="OrthoDB" id="2538135at2759"/>
<dbReference type="Proteomes" id="UP000005206">
    <property type="component" value="Unassembled WGS sequence"/>
</dbReference>
<dbReference type="GO" id="GO:0005634">
    <property type="term" value="C:nucleus"/>
    <property type="evidence" value="ECO:0007669"/>
    <property type="project" value="UniProtKB-SubCell"/>
</dbReference>
<dbReference type="GO" id="GO:0000981">
    <property type="term" value="F:DNA-binding transcription factor activity, RNA polymerase II-specific"/>
    <property type="evidence" value="ECO:0007669"/>
    <property type="project" value="InterPro"/>
</dbReference>
<dbReference type="GO" id="GO:0000977">
    <property type="term" value="F:RNA polymerase II transcription regulatory region sequence-specific DNA binding"/>
    <property type="evidence" value="ECO:0007669"/>
    <property type="project" value="TreeGrafter"/>
</dbReference>
<dbReference type="GO" id="GO:0008270">
    <property type="term" value="F:zinc ion binding"/>
    <property type="evidence" value="ECO:0007669"/>
    <property type="project" value="InterPro"/>
</dbReference>
<dbReference type="GO" id="GO:0009267">
    <property type="term" value="P:cellular response to starvation"/>
    <property type="evidence" value="ECO:0007669"/>
    <property type="project" value="TreeGrafter"/>
</dbReference>
<dbReference type="GO" id="GO:0006094">
    <property type="term" value="P:gluconeogenesis"/>
    <property type="evidence" value="ECO:0007669"/>
    <property type="project" value="UniProtKB-KW"/>
</dbReference>
<dbReference type="CDD" id="cd00067">
    <property type="entry name" value="GAL4"/>
    <property type="match status" value="1"/>
</dbReference>
<dbReference type="Gene3D" id="4.10.240.10">
    <property type="entry name" value="Zn(2)-C6 fungal-type DNA-binding domain"/>
    <property type="match status" value="1"/>
</dbReference>
<dbReference type="InterPro" id="IPR050335">
    <property type="entry name" value="ERT1_acuK_gluconeogen_tf"/>
</dbReference>
<dbReference type="InterPro" id="IPR056751">
    <property type="entry name" value="PAS_13"/>
</dbReference>
<dbReference type="InterPro" id="IPR036864">
    <property type="entry name" value="Zn2-C6_fun-type_DNA-bd_sf"/>
</dbReference>
<dbReference type="InterPro" id="IPR001138">
    <property type="entry name" value="Zn2Cys6_DnaBD"/>
</dbReference>
<dbReference type="PANTHER" id="PTHR47659:SF1">
    <property type="entry name" value="TRANSCRIPTION ACTIVATOR OF GLUCONEOGENESIS ERT1"/>
    <property type="match status" value="1"/>
</dbReference>
<dbReference type="PANTHER" id="PTHR47659">
    <property type="entry name" value="ZN(II)2CYS6 TRANSCRIPTION FACTOR (EUROFUNG)-RELATED"/>
    <property type="match status" value="1"/>
</dbReference>
<dbReference type="Pfam" id="PF24990">
    <property type="entry name" value="PAS_13"/>
    <property type="match status" value="1"/>
</dbReference>
<dbReference type="SMART" id="SM00066">
    <property type="entry name" value="GAL4"/>
    <property type="match status" value="1"/>
</dbReference>
<dbReference type="SUPFAM" id="SSF57701">
    <property type="entry name" value="Zn2/Cys6 DNA-binding domain"/>
    <property type="match status" value="1"/>
</dbReference>
<dbReference type="PROSITE" id="PS50048">
    <property type="entry name" value="ZN2_CY6_FUNGAL_2"/>
    <property type="match status" value="1"/>
</dbReference>
<sequence>MPHEMEENGAEVSDVMSENEDDTETFLKDDEKMTEQSTTDSTTEVKKKYDPKDPLRPRRKKARRACFACQRAHLTCGDERPCQRCIKRGLADACQDGVRKKAKYLHDAPPEALRPVLGPNYNPTPTPSRTNGHRHSSSQSDNLSATGSNFFSQGSTASLPVYSAGAQTPVAIDGLPSFNPQTSPTSFQGPINNAAHTPMNNMMPAGNMDFNALFDPSNPALYNFDLEGLNFGSQYAGWEFGILNKMALGAETPPRENSMSQTPTTEANYAALFGNANNGFDHPMLGADFSGMDQNNQSLYAQGNLQHGLPHAYAIAAGPTSLASPSTDTTASPHSVAGMDGSPNHNFAGIPTVPAATRPRPKHNKAGPKSILGKRQRDSAAIYESVKEPYPYTTGFHNMVAVLRNRLPGNKLLRIAKALGEIRPSFISCTKDLTRQDLVFMEKCFQRTLVEYDDFLQHCCAPTIVCRRSGEVAAVNKEFTALTGWTKDVLLGKEPNLNVNVYSGRSTNGTNTPDHNSQGEMTTPRPQRAMLDLSGGRPQPVFLGELLDDDSVVEFYQDFSQLAFEDSRGKVQRSCRLNKYRAPQDPDQKEPGSQKDAQPGILSSRVTRIDGSHGISRIEKDGKVECTYCWTIKRDVFDIPMMIIINFLPRYLPDQGPQQLAV</sequence>
<organism>
    <name type="scientific">Fusarium vanettenii (strain ATCC MYA-4622 / CBS 123669 / FGSC 9596 / NRRL 45880 / 77-13-4)</name>
    <name type="common">Fusarium solani subsp. pisi</name>
    <dbReference type="NCBI Taxonomy" id="660122"/>
    <lineage>
        <taxon>Eukaryota</taxon>
        <taxon>Fungi</taxon>
        <taxon>Dikarya</taxon>
        <taxon>Ascomycota</taxon>
        <taxon>Pezizomycotina</taxon>
        <taxon>Sordariomycetes</taxon>
        <taxon>Hypocreomycetidae</taxon>
        <taxon>Hypocreales</taxon>
        <taxon>Nectriaceae</taxon>
        <taxon>Fusarium</taxon>
        <taxon>Fusarium solani species complex</taxon>
        <taxon>Fusarium vanettenii</taxon>
    </lineage>
</organism>
<protein>
    <recommendedName>
        <fullName>Transcription activator of gluconeogenesis NECHADRAFT_59099</fullName>
    </recommendedName>
</protein>
<gene>
    <name type="ORF">NECHADRAFT_59099</name>
</gene>
<reference key="1">
    <citation type="journal article" date="2009" name="PLoS Genet.">
        <title>The genome of Nectria haematococca: contribution of supernumerary chromosomes to gene expansion.</title>
        <authorList>
            <person name="Coleman J.J."/>
            <person name="Rounsley S.D."/>
            <person name="Rodriguez-Carres M."/>
            <person name="Kuo A."/>
            <person name="Wasmann C.C."/>
            <person name="Grimwood J."/>
            <person name="Schmutz J."/>
            <person name="Taga M."/>
            <person name="White G.J."/>
            <person name="Zhou S."/>
            <person name="Schwartz D.C."/>
            <person name="Freitag M."/>
            <person name="Ma L.-J."/>
            <person name="Danchin E.G.J."/>
            <person name="Henrissat B."/>
            <person name="Coutinho P.M."/>
            <person name="Nelson D.R."/>
            <person name="Straney D."/>
            <person name="Napoli C.A."/>
            <person name="Barker B.M."/>
            <person name="Gribskov M."/>
            <person name="Rep M."/>
            <person name="Kroken S."/>
            <person name="Molnar I."/>
            <person name="Rensing C."/>
            <person name="Kennell J.C."/>
            <person name="Zamora J."/>
            <person name="Farman M.L."/>
            <person name="Selker E.U."/>
            <person name="Salamov A."/>
            <person name="Shapiro H."/>
            <person name="Pangilinan J."/>
            <person name="Lindquist E."/>
            <person name="Lamers C."/>
            <person name="Grigoriev I.V."/>
            <person name="Geiser D.M."/>
            <person name="Covert S.F."/>
            <person name="Temporini E."/>
            <person name="VanEtten H.D."/>
        </authorList>
    </citation>
    <scope>NUCLEOTIDE SEQUENCE [LARGE SCALE GENOMIC DNA]</scope>
    <source>
        <strain>ATCC MYA-4622 / CBS 123669 / FGSC 9596 / NRRL 45880 / 77-13-4</strain>
    </source>
</reference>
<accession>C7YM38</accession>